<comment type="function">
    <text evidence="1 3 4 5">J region of the variable domain of T cell receptor (TR) beta chain that participates in the antigen recognition (PubMed:24600447). Alpha-beta T cell receptors are antigen specific receptors which are essential to the immune response and are present on the cell surface of T lymphocytes. Recognize peptide-major histocompatibility (MH) (pMH) complexes that are displayed by antigen presenting cells (APC), a prerequisite for efficient T cell adaptive immunity against pathogens (PubMed:25493333). Binding of alpha-beta TR to pMH complex initiates TR-CD3 clustering on the cell surface and intracellular activation of LCK that phosphorylates the ITAM motifs of CD3G, CD3D, CD3E and CD247 enabling the recruitment of ZAP70. In turn ZAP70 phosphorylates LAT, which recruits numerous signaling molecules to form the LAT signalosome. The LAT signalosome propagates signal branching to three major signaling pathways, the calcium, the mitogen-activated protein kinase (MAPK) kinase and the nuclear factor NF-kappa-B (NF-kB) pathways, leading to the mobilization of transcription factors that are critical for gene expression and essential for T cell growth and differentiation (PubMed:23524462). The T cell repertoire is generated in the thymus, by V-(D)-J rearrangement. This repertoire is then shaped by intrathymic selection events to generate a peripheral T cell pool of self-MH restricted, non-autoaggressive T cells. Post-thymic interaction of alpha-beta TR with the pMH complexes shapes TR structural and functional avidity (PubMed:15040585).</text>
</comment>
<comment type="subunit">
    <text evidence="2">Alpha-beta TR is a heterodimer composed of an alpha and beta chain; disulfide-linked. The alpha-beta TR is associated with the transmembrane signaling CD3 coreceptor proteins to form the TR-CD3 (TcR or TCR). The assembly of alpha-beta TR heterodimers with CD3 occurs in the endoplasmic reticulum where a single alpha-beta TR heterodimer associates with one CD3D-CD3E heterodimer, one CD3G-CD3E heterodimer and one CD247 homodimer forming a stable octameric structure. CD3D-CD3E and CD3G-CD3E heterodimers preferentially associate with TR alpha and TR beta chains, respectively. The association of the CD247 homodimer is the last step of TcR assembly in the endoplasmic reticulum and is required for transport to the cell surface.</text>
</comment>
<comment type="subcellular location">
    <subcellularLocation>
        <location evidence="2">Cell membrane</location>
    </subcellularLocation>
</comment>
<comment type="caution">
    <text evidence="7">The sequence shown is that of IMGT allele TRBJ2-6*01.</text>
</comment>
<reference key="1">
    <citation type="journal article" date="2003" name="Nature">
        <title>The DNA sequence of human chromosome 7.</title>
        <authorList>
            <person name="Hillier L.W."/>
            <person name="Fulton R.S."/>
            <person name="Fulton L.A."/>
            <person name="Graves T.A."/>
            <person name="Pepin K.H."/>
            <person name="Wagner-McPherson C."/>
            <person name="Layman D."/>
            <person name="Maas J."/>
            <person name="Jaeger S."/>
            <person name="Walker R."/>
            <person name="Wylie K."/>
            <person name="Sekhon M."/>
            <person name="Becker M.C."/>
            <person name="O'Laughlin M.D."/>
            <person name="Schaller M.E."/>
            <person name="Fewell G.A."/>
            <person name="Delehaunty K.D."/>
            <person name="Miner T.L."/>
            <person name="Nash W.E."/>
            <person name="Cordes M."/>
            <person name="Du H."/>
            <person name="Sun H."/>
            <person name="Edwards J."/>
            <person name="Bradshaw-Cordum H."/>
            <person name="Ali J."/>
            <person name="Andrews S."/>
            <person name="Isak A."/>
            <person name="Vanbrunt A."/>
            <person name="Nguyen C."/>
            <person name="Du F."/>
            <person name="Lamar B."/>
            <person name="Courtney L."/>
            <person name="Kalicki J."/>
            <person name="Ozersky P."/>
            <person name="Bielicki L."/>
            <person name="Scott K."/>
            <person name="Holmes A."/>
            <person name="Harkins R."/>
            <person name="Harris A."/>
            <person name="Strong C.M."/>
            <person name="Hou S."/>
            <person name="Tomlinson C."/>
            <person name="Dauphin-Kohlberg S."/>
            <person name="Kozlowicz-Reilly A."/>
            <person name="Leonard S."/>
            <person name="Rohlfing T."/>
            <person name="Rock S.M."/>
            <person name="Tin-Wollam A.-M."/>
            <person name="Abbott A."/>
            <person name="Minx P."/>
            <person name="Maupin R."/>
            <person name="Strowmatt C."/>
            <person name="Latreille P."/>
            <person name="Miller N."/>
            <person name="Johnson D."/>
            <person name="Murray J."/>
            <person name="Woessner J.P."/>
            <person name="Wendl M.C."/>
            <person name="Yang S.-P."/>
            <person name="Schultz B.R."/>
            <person name="Wallis J.W."/>
            <person name="Spieth J."/>
            <person name="Bieri T.A."/>
            <person name="Nelson J.O."/>
            <person name="Berkowicz N."/>
            <person name="Wohldmann P.E."/>
            <person name="Cook L.L."/>
            <person name="Hickenbotham M.T."/>
            <person name="Eldred J."/>
            <person name="Williams D."/>
            <person name="Bedell J.A."/>
            <person name="Mardis E.R."/>
            <person name="Clifton S.W."/>
            <person name="Chissoe S.L."/>
            <person name="Marra M.A."/>
            <person name="Raymond C."/>
            <person name="Haugen E."/>
            <person name="Gillett W."/>
            <person name="Zhou Y."/>
            <person name="James R."/>
            <person name="Phelps K."/>
            <person name="Iadanoto S."/>
            <person name="Bubb K."/>
            <person name="Simms E."/>
            <person name="Levy R."/>
            <person name="Clendenning J."/>
            <person name="Kaul R."/>
            <person name="Kent W.J."/>
            <person name="Furey T.S."/>
            <person name="Baertsch R.A."/>
            <person name="Brent M.R."/>
            <person name="Keibler E."/>
            <person name="Flicek P."/>
            <person name="Bork P."/>
            <person name="Suyama M."/>
            <person name="Bailey J.A."/>
            <person name="Portnoy M.E."/>
            <person name="Torrents D."/>
            <person name="Chinwalla A.T."/>
            <person name="Gish W.R."/>
            <person name="Eddy S.R."/>
            <person name="McPherson J.D."/>
            <person name="Olson M.V."/>
            <person name="Eichler E.E."/>
            <person name="Green E.D."/>
            <person name="Waterston R.H."/>
            <person name="Wilson R.K."/>
        </authorList>
    </citation>
    <scope>NUCLEOTIDE SEQUENCE [LARGE SCALE GENOMIC DNA] (IMGT ALLELE TRBJ2-6*01)</scope>
</reference>
<reference key="2">
    <citation type="book" date="2001" name="The T Cell Receptor FactsBook.">
        <title>The T Cell Receptor FactsBook.</title>
        <editorList>
            <person name="Lefranc M.P."/>
            <person name="Lefranc G."/>
        </editorList>
        <authorList>
            <person name="Lefranc M.P."/>
            <person name="Lefranc G."/>
        </authorList>
    </citation>
    <scope>NOMENCLATURE</scope>
</reference>
<reference key="3">
    <citation type="journal article" date="2004" name="Nat. Rev. Immunol.">
        <title>The many important facets of T-cell repertoire diversity.</title>
        <authorList>
            <person name="Nikolich-Zugich J."/>
            <person name="Slifka M.K."/>
            <person name="Messaoudi I."/>
        </authorList>
    </citation>
    <scope>REVIEW ON T CELL REPERTOIRE DIVERSITY</scope>
</reference>
<reference key="4">
    <citation type="journal article" date="2010" name="Cold Spring Harb. Perspect. Biol.">
        <title>Structural biology of the T-cell receptor: insights into receptor assembly, ligand recognition, and initiation of signaling.</title>
        <authorList>
            <person name="Wucherpfennig K.W."/>
            <person name="Gagnon E."/>
            <person name="Call M.J."/>
            <person name="Huseby E.S."/>
            <person name="Call M.E."/>
        </authorList>
    </citation>
    <scope>REVIEW ON T CELL RECEPTOR-CD3 COMPLEX ASSEMBLY</scope>
    <scope>SUBCELLULAR LOCATION</scope>
</reference>
<reference key="5">
    <citation type="journal article" date="2013" name="Nat. Rev. Immunol.">
        <title>T cell receptor signalling networks: branched, diversified and bounded.</title>
        <authorList>
            <person name="Brownlie R.J."/>
            <person name="Zamoyska R."/>
        </authorList>
    </citation>
    <scope>REVIEW ON T CELL RECEPTOR SIGNALING</scope>
</reference>
<reference key="6">
    <citation type="journal article" date="2014" name="Front. Immunol.">
        <title>Immunoglobulin and T Cell Receptor Genes: IMGT((R)) and the Birth and Rise of Immunoinformatics.</title>
        <authorList>
            <person name="Lefranc M.P."/>
        </authorList>
    </citation>
    <scope>NOMENCLATURE</scope>
</reference>
<reference key="7">
    <citation type="journal article" date="2015" name="Annu. Rev. Immunol.">
        <title>T cell antigen receptor recognition of antigen-presenting molecules.</title>
        <authorList>
            <person name="Rossjohn J."/>
            <person name="Gras S."/>
            <person name="Miles J.J."/>
            <person name="Turner S.J."/>
            <person name="Godfrey D.I."/>
            <person name="McCluskey J."/>
        </authorList>
    </citation>
    <scope>REVIEW ON FUNCTION</scope>
</reference>
<name>TJB26_HUMAN</name>
<protein>
    <recommendedName>
        <fullName evidence="6">T cell receptor beta joining 2-6</fullName>
    </recommendedName>
</protein>
<keyword id="KW-1064">Adaptive immunity</keyword>
<keyword id="KW-1003">Cell membrane</keyword>
<keyword id="KW-0391">Immunity</keyword>
<keyword id="KW-0472">Membrane</keyword>
<keyword id="KW-0675">Receptor</keyword>
<keyword id="KW-1185">Reference proteome</keyword>
<keyword id="KW-1279">T cell receptor</keyword>
<dbReference type="EMBL" id="AC239618">
    <property type="status" value="NOT_ANNOTATED_CDS"/>
    <property type="molecule type" value="Genomic_DNA"/>
</dbReference>
<dbReference type="EMBL" id="AC245427">
    <property type="status" value="NOT_ANNOTATED_CDS"/>
    <property type="molecule type" value="Genomic_DNA"/>
</dbReference>
<dbReference type="IMGT_GENE-DB" id="TRBJ2-6"/>
<dbReference type="BioMuta" id="TRBJ2-6"/>
<dbReference type="UCSC" id="uc064ito.1">
    <property type="organism name" value="human"/>
</dbReference>
<dbReference type="AGR" id="HGNC:12174"/>
<dbReference type="GeneCards" id="TRBJ2-6"/>
<dbReference type="HGNC" id="HGNC:12174">
    <property type="gene designation" value="TRBJ2-6"/>
</dbReference>
<dbReference type="neXtProt" id="NX_A0A0A0MT70"/>
<dbReference type="HOGENOM" id="CLU_221942_1_0_1"/>
<dbReference type="InParanoid" id="A0A0A0MT70"/>
<dbReference type="PAN-GO" id="A0A0A0MT70">
    <property type="GO annotations" value="0 GO annotations based on evolutionary models"/>
</dbReference>
<dbReference type="ChiTaRS" id="TRBJ2-6">
    <property type="organism name" value="human"/>
</dbReference>
<dbReference type="PRO" id="PR:A0A0A0MT70"/>
<dbReference type="Proteomes" id="UP000005640">
    <property type="component" value="Unplaced"/>
</dbReference>
<dbReference type="GO" id="GO:0042101">
    <property type="term" value="C:T cell receptor complex"/>
    <property type="evidence" value="ECO:0007669"/>
    <property type="project" value="UniProtKB-KW"/>
</dbReference>
<dbReference type="GO" id="GO:0002250">
    <property type="term" value="P:adaptive immune response"/>
    <property type="evidence" value="ECO:0007669"/>
    <property type="project" value="UniProtKB-KW"/>
</dbReference>
<organism>
    <name type="scientific">Homo sapiens</name>
    <name type="common">Human</name>
    <dbReference type="NCBI Taxonomy" id="9606"/>
    <lineage>
        <taxon>Eukaryota</taxon>
        <taxon>Metazoa</taxon>
        <taxon>Chordata</taxon>
        <taxon>Craniata</taxon>
        <taxon>Vertebrata</taxon>
        <taxon>Euteleostomi</taxon>
        <taxon>Mammalia</taxon>
        <taxon>Eutheria</taxon>
        <taxon>Euarchontoglires</taxon>
        <taxon>Primates</taxon>
        <taxon>Haplorrhini</taxon>
        <taxon>Catarrhini</taxon>
        <taxon>Hominidae</taxon>
        <taxon>Homo</taxon>
    </lineage>
</organism>
<feature type="chain" id="PRO_0000447312" description="T cell receptor beta joining 2-6">
    <location>
        <begin position="1" status="less than"/>
        <end position="17" status="greater than"/>
    </location>
</feature>
<feature type="non-terminal residue">
    <location>
        <position position="1"/>
    </location>
</feature>
<feature type="non-terminal residue">
    <location>
        <position position="17"/>
    </location>
</feature>
<sequence>SGANVLTFGAGSRLTVL</sequence>
<evidence type="ECO:0000303" key="1">
    <source>
    </source>
</evidence>
<evidence type="ECO:0000303" key="2">
    <source>
    </source>
</evidence>
<evidence type="ECO:0000303" key="3">
    <source>
    </source>
</evidence>
<evidence type="ECO:0000303" key="4">
    <source>
    </source>
</evidence>
<evidence type="ECO:0000303" key="5">
    <source>
    </source>
</evidence>
<evidence type="ECO:0000303" key="6">
    <source ref="2"/>
</evidence>
<evidence type="ECO:0000305" key="7"/>
<evidence type="ECO:0000312" key="8">
    <source>
        <dbReference type="HGNC" id="HGNC:12174"/>
    </source>
</evidence>
<gene>
    <name evidence="6 8" type="primary">TRBJ2-6</name>
</gene>
<accession>A0A0A0MT70</accession>
<proteinExistence type="predicted"/>